<sequence length="2030" mass="233103">MWTPTEEEKYGVVICSFRGSVPQGLVLEIGETVQILEKCEGWYRGVSTKKPNVKGIFPANYIHLKKAIVSNRGQYETVVPLEDSIVTEVTATLQEWASLWKQLYVKHKVDLFYKLRHVMNELIDLRRQLLSGHLTQDQVREVKRHITVRLDWGNEHLGLDLVPRKDFEVVDSDQISVSDLYKMHLSSRQSVQQSTSQVDTMRPRHGETCRMPVPHHFFLSLKSFTYNTIGEDTDVFFSLYDMREGKQISERFLVRLNKNGGPRNPEKIERMCALFTDLSSKDMKRDLYIVAHVIRIGRMLLNDSKKGPPHLHYRRPYGCAVLSILDVLQSLTEVKEEKDFVLKVYTCNNESEWSQIHENIIRKSSAKYSAPSASHGLIISLQLLRGDMEQIRRENPMIFNRGLAITRKLGFPDVIMPGDIRNDLYLTLEKGDFERGGKSVQKNIEVTMYVLYADGEILKDCISLGSGEPNRSSYHSFVLYHSNSPRWGEIIKLPIPIDRFRGSHLRFEFRHCSTKDKGEKKLFGFAFSTLMRDDGTTLSDDIHELYVYKCDENSTFNNHALYLGLPCCKEDYNGCPNIPSSLIFQRSTKESFFISTQLSSTKLTQNVDLLALLKWKAFPDRIMDVLGRLRHVSGEEIVKFLQDILDTLFVILDDNTEKYGLLVFQSLVFIINLLRDIKYFHFRPVMDTYIQKHFAGALAYKELIRCLKWYMDCSAELIRQDHIQEAMRALEYLFKFIVQSRILYSRATCGMEEEQFRSSIQELFQSIRFVLSLDSRNSETLLFTQAALLNSFPTIFDELLQMFTVQEVAEFVRGTLGSMPSTVHIGQSMDVVKLQSIARTVDSRLFSFSESRRILLPVVLHHIHLHLRQQKELLICSGILGSIFSIVKTSSLEADVMEEVEMMVESLLDVLLQTLLTIMSKSHAQEAVRGQRCPQCTAEITGEYVSCLLSLLRQMCDTHFQHLLDNFQSKDELKEFLLKIFCVFRNLMKMSVFPRDWMVMRLLTSNIIVTTVQYLSSALHKNFTETDFDFKVWNSYFSLAVLFINQPSLQLEIITSAKRKKILDKYGDMRVMMAYELFSMWQNLGEHKIHFIPGMIGPFLGVTLVPQPEVRNIMIPIFHDMMDWEQRKNGNFKQVEAELIDKLDSMVSEGKGDESYRELFSLLTQLFGPYPSLLEKVEQETWRETGISFVTSVTRLMERLLDYRDCMKGEETENKKIGCTVNLMNFYKSEINKEEMYIRYIHKLCDMHLQAENYTEAAFTLLLYCELLQWEDRPLREFLHYPSQTEWQRKEGLCRKIIHYFNKGKSWEFGIPLCRELACQYESLYDYQSLSWIRKMEASYYDNIMEQQRLEPEFFRVGFYGRKFPFFLRNKEYVCRGHDYERLEAFQQRMLSEFPQAVAMQHPNHPDDAILQCDAQYLQIYAVTPIPDYVDVLQMDRVPDRVKSFYRVNNVRKFRYDRPFHKGPKDKENEFKSLWIERTTLTLTHSLPGISRWFEVERRELVEVSPLENAIQVVENKNQELRSLISQYQHKQVHGNINLLSMCLNGVIDAAVNGGIARYQEAFFDKDYINKHPGDAEKITQLKELMQEQVHVLGVGLAVHEKFVHPEMRPLHKKLIDQFQMMRASLYHEFPGLDKLSPACSGTSTPRGNVLASHSPMSPESIKMTHRHSPMNLMGTGRHSSSSLSSHASSEAGNMVMLGDGSMGDAPEDLYHHMQLAYPNPRYQGSVTNVSVLSSSQASPSSSSLSSTHSAPSQMITSAPSSARGSPSLPDKYRHAREMMLLLPTYRDRPSSAMYPAAILENGQPPNFQRALFQQVVGACKPCSDPNLSVAEKGHYSLHFDAFHHPLGDTPPALPARTLRKSPLHPIPASPTSPQSGLDGSNSTLSGSASSGVSSLSESNFGHSSEAPPRTDTMDSMPSQAWNADEDLEPPYLPVHYSLSESAVLDSIKAQPCRSHSAPGCVIPQDPMDPPALPPKPYHPRLPALEHDEGVLLREETERPRGLHRKAPLPPGSAKEEQARMAWEHGRGEQ</sequence>
<gene>
    <name type="primary">DOCK3</name>
    <name type="synonym">KIAA0299</name>
    <name type="synonym">MOCA</name>
</gene>
<protein>
    <recommendedName>
        <fullName>Dedicator of cytokinesis protein 3</fullName>
    </recommendedName>
    <alternativeName>
        <fullName>Modifier of cell adhesion</fullName>
    </alternativeName>
    <alternativeName>
        <fullName>Presenilin-binding protein</fullName>
        <shortName>PBP</shortName>
    </alternativeName>
</protein>
<name>DOCK3_HUMAN</name>
<keyword id="KW-0160">Chromosomal rearrangement</keyword>
<keyword id="KW-0963">Cytoplasm</keyword>
<keyword id="KW-0225">Disease variant</keyword>
<keyword id="KW-0344">Guanine-nucleotide releasing factor</keyword>
<keyword id="KW-0597">Phosphoprotein</keyword>
<keyword id="KW-1267">Proteomics identification</keyword>
<keyword id="KW-1185">Reference proteome</keyword>
<keyword id="KW-0728">SH3 domain</keyword>
<keyword id="KW-0729">SH3-binding</keyword>
<proteinExistence type="evidence at protein level"/>
<reference key="1">
    <citation type="journal article" date="2000" name="J. Neurochem.">
        <title>Isolation and characterization of novel presenilin binding protein.</title>
        <authorList>
            <person name="Kashiwa A."/>
            <person name="Yoshida H."/>
            <person name="Lee S."/>
            <person name="Paladino T."/>
            <person name="Liu Y."/>
            <person name="Chen Q."/>
            <person name="Dargusch R."/>
            <person name="Schubert D."/>
            <person name="Kimura H."/>
        </authorList>
    </citation>
    <scope>NUCLEOTIDE SEQUENCE [MRNA]</scope>
</reference>
<reference key="2">
    <citation type="journal article" date="2003" name="J. Med. Genet.">
        <title>Disruption of a novel member of a sodium/hydrogen exchanger family and DOCK3 is associated with an attention deficit hyperactivity disorder-like phenotype.</title>
        <authorList>
            <person name="De Silva M.G."/>
            <person name="Elliott K."/>
            <person name="Dahl H.-H.M."/>
            <person name="Fitzpatrick E."/>
            <person name="Wilcox S."/>
            <person name="Delatycki M."/>
            <person name="Williamson R."/>
            <person name="Efron D."/>
            <person name="Lynch M."/>
            <person name="Forrest S."/>
        </authorList>
    </citation>
    <scope>NUCLEOTIDE SEQUENCE [MRNA]</scope>
    <scope>CHROMOSOMAL REARRANGEMENT</scope>
</reference>
<reference key="3">
    <citation type="journal article" date="1997" name="DNA Res.">
        <title>Prediction of the coding sequences of unidentified human genes. VII. The complete sequences of 100 new cDNA clones from brain which can code for large proteins in vitro.</title>
        <authorList>
            <person name="Nagase T."/>
            <person name="Ishikawa K."/>
            <person name="Nakajima D."/>
            <person name="Ohira M."/>
            <person name="Seki N."/>
            <person name="Miyajima N."/>
            <person name="Tanaka A."/>
            <person name="Kotani H."/>
            <person name="Nomura N."/>
            <person name="Ohara O."/>
        </authorList>
    </citation>
    <scope>NUCLEOTIDE SEQUENCE [LARGE SCALE MRNA] OF 124-2030</scope>
    <source>
        <tissue>Brain</tissue>
    </source>
</reference>
<reference key="4">
    <citation type="journal article" date="2001" name="Am. J. Pathol.">
        <title>Presenilin binding protein is associated with neurofibrillary alterations in Alzheimer's disease and stimulates tau phosphorylation.</title>
        <authorList>
            <person name="Chen Q."/>
            <person name="Yoshida H."/>
            <person name="Schubert D."/>
            <person name="Maher P."/>
            <person name="Mallory M."/>
            <person name="Masliah E."/>
        </authorList>
    </citation>
    <scope>TISSUE SPECIFICITY</scope>
</reference>
<reference key="5">
    <citation type="journal article" date="2002" name="J. Cell Sci.">
        <title>Identification of an evolutionarily conserved superfamily of DOCK180-related proteins with guanine nucleotide exchange activity.</title>
        <authorList>
            <person name="Cote J.-F."/>
            <person name="Vuori K."/>
        </authorList>
    </citation>
    <scope>NOMENCLATURE</scope>
</reference>
<reference key="6">
    <citation type="journal article" date="2017" name="Clin. Genet.">
        <title>Biallelic loss-of-function variants in DOCK3 cause muscle hypotonia, ataxia, and intellectual disability.</title>
        <authorList>
            <person name="Helbig K.L."/>
            <person name="Mroske C."/>
            <person name="Moorthy D."/>
            <person name="Sajan S.A."/>
            <person name="Velinov M."/>
        </authorList>
    </citation>
    <scope>INVOLVEMENT IN NEDIDHA</scope>
    <scope>VARIANT NEDIDHA 128-GLN--GLN-2030 DEL</scope>
</reference>
<reference key="7">
    <citation type="journal article" date="2018" name="Am. J. Med. Genet. A">
        <title>DOCK3-related neurodevelopmental syndrome: Biallelic intragenic deletion of DOCK3 in a boy with developmental delay and hypotonia.</title>
        <authorList>
            <person name="Iwata-Otsubo A."/>
            <person name="Ritter A.L."/>
            <person name="Weckselbatt B."/>
            <person name="Ryan N.R."/>
            <person name="Burgess D."/>
            <person name="Conlin L.K."/>
            <person name="Izumi K."/>
        </authorList>
    </citation>
    <scope>INVOLVEMENT IN NEDIDHA</scope>
</reference>
<reference key="8">
    <citation type="journal article" date="2019" name="Eur. J. Hum. Genet.">
        <title>Variants in DOCK3 cause developmental delay and hypotonia.</title>
        <authorList>
            <person name="Wiltrout K."/>
            <person name="Ferrer A."/>
            <person name="van de Laar I."/>
            <person name="Namekata K."/>
            <person name="Harada T."/>
            <person name="Klee E.W."/>
            <person name="Zimmerman M.T."/>
            <person name="Cousin M.A."/>
            <person name="Kempainen J.L."/>
            <person name="Babovic-Vuksanovic D."/>
            <person name="van Slegtenhorst M.A."/>
            <person name="Aarts-Tesselaar C.D."/>
            <person name="Schnur R.E."/>
            <person name="Andrews M."/>
            <person name="Shinawi M."/>
        </authorList>
    </citation>
    <scope>INVOLVEMENT IN NEDIDHA</scope>
    <scope>VARIANTS NEDIDHA GLN-392; ARG-1296 AND LEU-1674</scope>
</reference>
<dbReference type="EMBL" id="AY145303">
    <property type="protein sequence ID" value="AAN12301.1"/>
    <property type="molecule type" value="mRNA"/>
</dbReference>
<dbReference type="EMBL" id="AY254099">
    <property type="protein sequence ID" value="AAP80572.1"/>
    <property type="molecule type" value="mRNA"/>
</dbReference>
<dbReference type="EMBL" id="AB002297">
    <property type="protein sequence ID" value="BAA20759.1"/>
    <property type="molecule type" value="mRNA"/>
</dbReference>
<dbReference type="CCDS" id="CCDS46835.1"/>
<dbReference type="RefSeq" id="NP_004938.1">
    <property type="nucleotide sequence ID" value="NM_004947.5"/>
</dbReference>
<dbReference type="SMR" id="Q8IZD9"/>
<dbReference type="BioGRID" id="108130">
    <property type="interactions" value="64"/>
</dbReference>
<dbReference type="FunCoup" id="Q8IZD9">
    <property type="interactions" value="863"/>
</dbReference>
<dbReference type="IntAct" id="Q8IZD9">
    <property type="interactions" value="43"/>
</dbReference>
<dbReference type="STRING" id="9606.ENSP00000266037"/>
<dbReference type="GlyGen" id="Q8IZD9">
    <property type="glycosylation" value="2 sites, 1 N-linked glycan (1 site), 1 O-linked glycan (1 site)"/>
</dbReference>
<dbReference type="iPTMnet" id="Q8IZD9"/>
<dbReference type="PhosphoSitePlus" id="Q8IZD9"/>
<dbReference type="SwissPalm" id="Q8IZD9"/>
<dbReference type="BioMuta" id="DOCK3"/>
<dbReference type="DMDM" id="32469734"/>
<dbReference type="jPOST" id="Q8IZD9"/>
<dbReference type="MassIVE" id="Q8IZD9"/>
<dbReference type="PaxDb" id="9606-ENSP00000266037"/>
<dbReference type="PeptideAtlas" id="Q8IZD9"/>
<dbReference type="ProteomicsDB" id="71332"/>
<dbReference type="Antibodypedia" id="46085">
    <property type="antibodies" value="83 antibodies from 18 providers"/>
</dbReference>
<dbReference type="DNASU" id="1795"/>
<dbReference type="Ensembl" id="ENST00000266037.10">
    <property type="protein sequence ID" value="ENSP00000266037.8"/>
    <property type="gene ID" value="ENSG00000088538.13"/>
</dbReference>
<dbReference type="GeneID" id="1795"/>
<dbReference type="KEGG" id="hsa:1795"/>
<dbReference type="MANE-Select" id="ENST00000266037.10">
    <property type="protein sequence ID" value="ENSP00000266037.8"/>
    <property type="RefSeq nucleotide sequence ID" value="NM_004947.5"/>
    <property type="RefSeq protein sequence ID" value="NP_004938.1"/>
</dbReference>
<dbReference type="UCSC" id="uc011bds.2">
    <property type="organism name" value="human"/>
</dbReference>
<dbReference type="AGR" id="HGNC:2989"/>
<dbReference type="CTD" id="1795"/>
<dbReference type="DisGeNET" id="1795"/>
<dbReference type="GeneCards" id="DOCK3"/>
<dbReference type="HGNC" id="HGNC:2989">
    <property type="gene designation" value="DOCK3"/>
</dbReference>
<dbReference type="HPA" id="ENSG00000088538">
    <property type="expression patterns" value="Tissue enhanced (brain, thyroid gland)"/>
</dbReference>
<dbReference type="MalaCards" id="DOCK3"/>
<dbReference type="MIM" id="603123">
    <property type="type" value="gene"/>
</dbReference>
<dbReference type="MIM" id="618292">
    <property type="type" value="phenotype"/>
</dbReference>
<dbReference type="neXtProt" id="NX_Q8IZD9"/>
<dbReference type="OpenTargets" id="ENSG00000088538"/>
<dbReference type="Orphanet" id="528084">
    <property type="disease" value="Non-specific syndromic intellectual disability"/>
</dbReference>
<dbReference type="PharmGKB" id="PA27455"/>
<dbReference type="VEuPathDB" id="HostDB:ENSG00000088538"/>
<dbReference type="eggNOG" id="KOG1998">
    <property type="taxonomic scope" value="Eukaryota"/>
</dbReference>
<dbReference type="GeneTree" id="ENSGT00940000155514"/>
<dbReference type="HOGENOM" id="CLU_000595_2_0_1"/>
<dbReference type="InParanoid" id="Q8IZD9"/>
<dbReference type="OMA" id="XQYETVV"/>
<dbReference type="OrthoDB" id="18896at2759"/>
<dbReference type="PAN-GO" id="Q8IZD9">
    <property type="GO annotations" value="4 GO annotations based on evolutionary models"/>
</dbReference>
<dbReference type="PhylomeDB" id="Q8IZD9"/>
<dbReference type="TreeFam" id="TF300423"/>
<dbReference type="PathwayCommons" id="Q8IZD9"/>
<dbReference type="Reactome" id="R-HSA-9013149">
    <property type="pathway name" value="RAC1 GTPase cycle"/>
</dbReference>
<dbReference type="Reactome" id="R-HSA-9013404">
    <property type="pathway name" value="RAC2 GTPase cycle"/>
</dbReference>
<dbReference type="Reactome" id="R-HSA-9013408">
    <property type="pathway name" value="RHOG GTPase cycle"/>
</dbReference>
<dbReference type="Reactome" id="R-HSA-9032759">
    <property type="pathway name" value="NTRK2 activates RAC1"/>
</dbReference>
<dbReference type="Reactome" id="R-HSA-983231">
    <property type="pathway name" value="Factors involved in megakaryocyte development and platelet production"/>
</dbReference>
<dbReference type="SignaLink" id="Q8IZD9"/>
<dbReference type="SIGNOR" id="Q8IZD9"/>
<dbReference type="BioGRID-ORCS" id="1795">
    <property type="hits" value="12 hits in 1149 CRISPR screens"/>
</dbReference>
<dbReference type="CD-CODE" id="FB4E32DD">
    <property type="entry name" value="Presynaptic clusters and postsynaptic densities"/>
</dbReference>
<dbReference type="ChiTaRS" id="DOCK3">
    <property type="organism name" value="human"/>
</dbReference>
<dbReference type="GeneWiki" id="Dock3"/>
<dbReference type="GenomeRNAi" id="1795"/>
<dbReference type="Pharos" id="Q8IZD9">
    <property type="development level" value="Tbio"/>
</dbReference>
<dbReference type="PRO" id="PR:Q8IZD9"/>
<dbReference type="Proteomes" id="UP000005640">
    <property type="component" value="Chromosome 3"/>
</dbReference>
<dbReference type="RNAct" id="Q8IZD9">
    <property type="molecule type" value="protein"/>
</dbReference>
<dbReference type="Bgee" id="ENSG00000088538">
    <property type="expression patterns" value="Expressed in frontal pole and 130 other cell types or tissues"/>
</dbReference>
<dbReference type="GO" id="GO:0005737">
    <property type="term" value="C:cytoplasm"/>
    <property type="evidence" value="ECO:0000318"/>
    <property type="project" value="GO_Central"/>
</dbReference>
<dbReference type="GO" id="GO:0005829">
    <property type="term" value="C:cytosol"/>
    <property type="evidence" value="ECO:0000314"/>
    <property type="project" value="HPA"/>
</dbReference>
<dbReference type="GO" id="GO:0005886">
    <property type="term" value="C:plasma membrane"/>
    <property type="evidence" value="ECO:0000318"/>
    <property type="project" value="GO_Central"/>
</dbReference>
<dbReference type="GO" id="GO:0005096">
    <property type="term" value="F:GTPase activator activity"/>
    <property type="evidence" value="ECO:0007669"/>
    <property type="project" value="InterPro"/>
</dbReference>
<dbReference type="GO" id="GO:0005085">
    <property type="term" value="F:guanyl-nucleotide exchange factor activity"/>
    <property type="evidence" value="ECO:0000318"/>
    <property type="project" value="GO_Central"/>
</dbReference>
<dbReference type="GO" id="GO:0017124">
    <property type="term" value="F:SH3 domain binding"/>
    <property type="evidence" value="ECO:0007669"/>
    <property type="project" value="UniProtKB-KW"/>
</dbReference>
<dbReference type="GO" id="GO:0031267">
    <property type="term" value="F:small GTPase binding"/>
    <property type="evidence" value="ECO:0000318"/>
    <property type="project" value="GO_Central"/>
</dbReference>
<dbReference type="GO" id="GO:0048011">
    <property type="term" value="P:neurotrophin TRK receptor signaling pathway"/>
    <property type="evidence" value="ECO:0000304"/>
    <property type="project" value="Reactome"/>
</dbReference>
<dbReference type="GO" id="GO:0051056">
    <property type="term" value="P:regulation of small GTPase mediated signal transduction"/>
    <property type="evidence" value="ECO:0000304"/>
    <property type="project" value="Reactome"/>
</dbReference>
<dbReference type="GO" id="GO:0007264">
    <property type="term" value="P:small GTPase-mediated signal transduction"/>
    <property type="evidence" value="ECO:0007669"/>
    <property type="project" value="InterPro"/>
</dbReference>
<dbReference type="CDD" id="cd08695">
    <property type="entry name" value="C2_Dock-B"/>
    <property type="match status" value="1"/>
</dbReference>
<dbReference type="CDD" id="cd11704">
    <property type="entry name" value="DHR2_DOCK3"/>
    <property type="match status" value="1"/>
</dbReference>
<dbReference type="CDD" id="cd12048">
    <property type="entry name" value="SH3_DOCK3_B"/>
    <property type="match status" value="1"/>
</dbReference>
<dbReference type="FunFam" id="1.25.40.410:FF:000003">
    <property type="entry name" value="Dedicator of cytokinesis protein 4"/>
    <property type="match status" value="1"/>
</dbReference>
<dbReference type="FunFam" id="2.30.30.40:FF:000057">
    <property type="entry name" value="Dedicator of cytokinesis protein 4"/>
    <property type="match status" value="1"/>
</dbReference>
<dbReference type="FunFam" id="2.60.40.150:FF:000045">
    <property type="entry name" value="Dedicator of cytokinesis protein 4"/>
    <property type="match status" value="1"/>
</dbReference>
<dbReference type="FunFam" id="1.20.1270.350:FF:000001">
    <property type="entry name" value="dedicator of cytokinesis protein 4"/>
    <property type="match status" value="1"/>
</dbReference>
<dbReference type="Gene3D" id="1.20.58.740">
    <property type="match status" value="1"/>
</dbReference>
<dbReference type="Gene3D" id="1.25.40.410">
    <property type="match status" value="1"/>
</dbReference>
<dbReference type="Gene3D" id="2.60.40.150">
    <property type="entry name" value="C2 domain"/>
    <property type="match status" value="1"/>
</dbReference>
<dbReference type="Gene3D" id="1.20.1270.350">
    <property type="entry name" value="Dedicator of cytokinesis N-terminal subdomain"/>
    <property type="match status" value="1"/>
</dbReference>
<dbReference type="Gene3D" id="2.30.30.40">
    <property type="entry name" value="SH3 Domains"/>
    <property type="match status" value="1"/>
</dbReference>
<dbReference type="InterPro" id="IPR016024">
    <property type="entry name" value="ARM-type_fold"/>
</dbReference>
<dbReference type="InterPro" id="IPR037811">
    <property type="entry name" value="C2_Dock-B"/>
</dbReference>
<dbReference type="InterPro" id="IPR027007">
    <property type="entry name" value="C2_DOCK-type_domain"/>
</dbReference>
<dbReference type="InterPro" id="IPR035892">
    <property type="entry name" value="C2_domain_sf"/>
</dbReference>
<dbReference type="InterPro" id="IPR026800">
    <property type="entry name" value="DHR2_DOCK3"/>
</dbReference>
<dbReference type="InterPro" id="IPR026791">
    <property type="entry name" value="DOCK"/>
</dbReference>
<dbReference type="InterPro" id="IPR035767">
    <property type="entry name" value="DOCK3_SH3"/>
</dbReference>
<dbReference type="InterPro" id="IPR043161">
    <property type="entry name" value="DOCK_C_lobe_A"/>
</dbReference>
<dbReference type="InterPro" id="IPR043162">
    <property type="entry name" value="DOCK_C_lobe_C"/>
</dbReference>
<dbReference type="InterPro" id="IPR032376">
    <property type="entry name" value="DOCK_N"/>
</dbReference>
<dbReference type="InterPro" id="IPR042455">
    <property type="entry name" value="DOCK_N_sub1"/>
</dbReference>
<dbReference type="InterPro" id="IPR027357">
    <property type="entry name" value="DOCKER_dom"/>
</dbReference>
<dbReference type="InterPro" id="IPR046769">
    <property type="entry name" value="DOCKER_Lobe_A"/>
</dbReference>
<dbReference type="InterPro" id="IPR046770">
    <property type="entry name" value="DOCKER_Lobe_B"/>
</dbReference>
<dbReference type="InterPro" id="IPR046773">
    <property type="entry name" value="DOCKER_Lobe_C"/>
</dbReference>
<dbReference type="InterPro" id="IPR036028">
    <property type="entry name" value="SH3-like_dom_sf"/>
</dbReference>
<dbReference type="InterPro" id="IPR001452">
    <property type="entry name" value="SH3_domain"/>
</dbReference>
<dbReference type="InterPro" id="IPR056372">
    <property type="entry name" value="TPR_DOCK"/>
</dbReference>
<dbReference type="PANTHER" id="PTHR45653">
    <property type="entry name" value="DEDICATOR OF CYTOKINESIS"/>
    <property type="match status" value="1"/>
</dbReference>
<dbReference type="PANTHER" id="PTHR45653:SF4">
    <property type="entry name" value="DEDICATOR OF CYTOKINESIS PROTEIN 3"/>
    <property type="match status" value="1"/>
</dbReference>
<dbReference type="Pfam" id="PF06920">
    <property type="entry name" value="DHR-2_Lobe_A"/>
    <property type="match status" value="1"/>
</dbReference>
<dbReference type="Pfam" id="PF20422">
    <property type="entry name" value="DHR-2_Lobe_B"/>
    <property type="match status" value="1"/>
</dbReference>
<dbReference type="Pfam" id="PF20421">
    <property type="entry name" value="DHR-2_Lobe_C"/>
    <property type="match status" value="1"/>
</dbReference>
<dbReference type="Pfam" id="PF14429">
    <property type="entry name" value="DOCK-C2"/>
    <property type="match status" value="1"/>
</dbReference>
<dbReference type="Pfam" id="PF16172">
    <property type="entry name" value="DOCK_N"/>
    <property type="match status" value="1"/>
</dbReference>
<dbReference type="Pfam" id="PF07653">
    <property type="entry name" value="SH3_2"/>
    <property type="match status" value="1"/>
</dbReference>
<dbReference type="Pfam" id="PF23554">
    <property type="entry name" value="TPR_DOCK"/>
    <property type="match status" value="1"/>
</dbReference>
<dbReference type="SMART" id="SM00326">
    <property type="entry name" value="SH3"/>
    <property type="match status" value="1"/>
</dbReference>
<dbReference type="SUPFAM" id="SSF48371">
    <property type="entry name" value="ARM repeat"/>
    <property type="match status" value="1"/>
</dbReference>
<dbReference type="SUPFAM" id="SSF50044">
    <property type="entry name" value="SH3-domain"/>
    <property type="match status" value="1"/>
</dbReference>
<dbReference type="PROSITE" id="PS51650">
    <property type="entry name" value="C2_DOCK"/>
    <property type="match status" value="1"/>
</dbReference>
<dbReference type="PROSITE" id="PS51651">
    <property type="entry name" value="DOCKER"/>
    <property type="match status" value="1"/>
</dbReference>
<dbReference type="PROSITE" id="PS50002">
    <property type="entry name" value="SH3"/>
    <property type="match status" value="1"/>
</dbReference>
<comment type="function">
    <text evidence="1">Potential guanine nucleotide exchange factor (GEF). GEF proteins activate some small GTPases by exchanging bound GDP for free GTP. Its interaction with presenilin proteins as well as its ability to stimulate Tau/MAPT phosphorylation suggest that it may be involved in Alzheimer disease. Ectopic expression in nerve cells decreases the secretion of amyloid-beta APBA1 protein and lowers the rate of cell-substratum adhesion, suggesting that it may affect the function of some small GTPase involved in the regulation of actin cytoskeleton or cell adhesion receptors (By similarity).</text>
</comment>
<comment type="subunit">
    <text evidence="1">Interacts with presenilin proteins PSEN1 and PSEN2. Interacts with CRK (By similarity).</text>
</comment>
<comment type="interaction">
    <interactant intactId="EBI-1752361">
        <id>Q8IZD9</id>
    </interactant>
    <interactant intactId="EBI-25409992">
        <id>Q13017-1</id>
        <label>ARHGAP5</label>
    </interactant>
    <organismsDiffer>false</organismsDiffer>
    <experiments>2</experiments>
</comment>
<comment type="interaction">
    <interactant intactId="EBI-1752361">
        <id>Q8IZD9</id>
    </interactant>
    <interactant intactId="EBI-740785">
        <id>P49639</id>
        <label>HOXA1</label>
    </interactant>
    <organismsDiffer>false</organismsDiffer>
    <experiments>3</experiments>
</comment>
<comment type="interaction">
    <interactant intactId="EBI-1752361">
        <id>Q8IZD9</id>
    </interactant>
    <interactant intactId="EBI-389883">
        <id>P16333</id>
        <label>NCK1</label>
    </interactant>
    <organismsDiffer>false</organismsDiffer>
    <experiments>3</experiments>
</comment>
<comment type="interaction">
    <interactant intactId="EBI-1752361">
        <id>Q8IZD9</id>
    </interactant>
    <interactant intactId="EBI-742388">
        <id>Q9H8W4</id>
        <label>PLEKHF2</label>
    </interactant>
    <organismsDiffer>false</organismsDiffer>
    <experiments>3</experiments>
</comment>
<comment type="subcellular location">
    <subcellularLocation>
        <location evidence="1">Cytoplasm</location>
    </subcellularLocation>
</comment>
<comment type="tissue specificity">
    <text evidence="8">In normal brains, it is localized in the neuropil, and occasionally in the pyramidal cells, while in Alzheimer disease brains, it is associated with neurofibrillary tangles.</text>
</comment>
<comment type="domain">
    <text evidence="1">The DOCKER domain may mediate some GEF activity.</text>
</comment>
<comment type="disease">
    <text evidence="9">A chromosomal aberration involving DOCK3 has been found in a family with early-onset behavioral/developmental disorder with features of attention deficit-hyperactivity disorder and intellectual disability. Inversion inv(3)(p14:q21). The inversion disrupts DOCK3 and SLC9A9.</text>
</comment>
<comment type="disease" evidence="10 11 12">
    <disease id="DI-05468">
        <name>Neurodevelopmental disorder with impaired intellectual development, hypotonia, and ataxia</name>
        <acronym>NEDIDHA</acronym>
        <description>An autosomal recessive disease characterized by global developmental delay, hypotonia, ataxic gait, hyporeflexia, poor or absent speech, and variable and mild dysmorphic features.</description>
        <dbReference type="MIM" id="618292"/>
    </disease>
    <text>The disease is caused by variants affecting the gene represented in this entry.</text>
</comment>
<comment type="similarity">
    <text evidence="5">Belongs to the DOCK family.</text>
</comment>
<accession>Q8IZD9</accession>
<accession>O15017</accession>
<evidence type="ECO:0000250" key="1"/>
<evidence type="ECO:0000250" key="2">
    <source>
        <dbReference type="UniProtKB" id="Q8CIQ7"/>
    </source>
</evidence>
<evidence type="ECO:0000255" key="3"/>
<evidence type="ECO:0000255" key="4">
    <source>
        <dbReference type="PROSITE-ProRule" id="PRU00192"/>
    </source>
</evidence>
<evidence type="ECO:0000255" key="5">
    <source>
        <dbReference type="PROSITE-ProRule" id="PRU00983"/>
    </source>
</evidence>
<evidence type="ECO:0000255" key="6">
    <source>
        <dbReference type="PROSITE-ProRule" id="PRU00984"/>
    </source>
</evidence>
<evidence type="ECO:0000256" key="7">
    <source>
        <dbReference type="SAM" id="MobiDB-lite"/>
    </source>
</evidence>
<evidence type="ECO:0000269" key="8">
    <source>
    </source>
</evidence>
<evidence type="ECO:0000269" key="9">
    <source>
    </source>
</evidence>
<evidence type="ECO:0000269" key="10">
    <source>
    </source>
</evidence>
<evidence type="ECO:0000269" key="11">
    <source>
    </source>
</evidence>
<evidence type="ECO:0000269" key="12">
    <source>
    </source>
</evidence>
<feature type="chain" id="PRO_0000189988" description="Dedicator of cytokinesis protein 3">
    <location>
        <begin position="1"/>
        <end position="2030"/>
    </location>
</feature>
<feature type="domain" description="SH3" evidence="4">
    <location>
        <begin position="6"/>
        <end position="67"/>
    </location>
</feature>
<feature type="domain" description="C2 DOCK-type" evidence="5">
    <location>
        <begin position="421"/>
        <end position="599"/>
    </location>
</feature>
<feature type="domain" description="DOCKER" evidence="6">
    <location>
        <begin position="1228"/>
        <end position="1635"/>
    </location>
</feature>
<feature type="region of interest" description="Disordered" evidence="7">
    <location>
        <begin position="1641"/>
        <end position="1662"/>
    </location>
</feature>
<feature type="region of interest" description="Disordered" evidence="7">
    <location>
        <begin position="1734"/>
        <end position="1771"/>
    </location>
</feature>
<feature type="region of interest" description="Disordered" evidence="7">
    <location>
        <begin position="1849"/>
        <end position="1927"/>
    </location>
</feature>
<feature type="region of interest" description="Disordered" evidence="7">
    <location>
        <begin position="1951"/>
        <end position="2030"/>
    </location>
</feature>
<feature type="short sequence motif" description="SH3-binding" evidence="3">
    <location>
        <begin position="1970"/>
        <end position="1976"/>
    </location>
</feature>
<feature type="compositionally biased region" description="Low complexity" evidence="7">
    <location>
        <begin position="1734"/>
        <end position="1754"/>
    </location>
</feature>
<feature type="compositionally biased region" description="Polar residues" evidence="7">
    <location>
        <begin position="1755"/>
        <end position="1765"/>
    </location>
</feature>
<feature type="compositionally biased region" description="Low complexity" evidence="7">
    <location>
        <begin position="1880"/>
        <end position="1902"/>
    </location>
</feature>
<feature type="compositionally biased region" description="Pro residues" evidence="7">
    <location>
        <begin position="1967"/>
        <end position="1977"/>
    </location>
</feature>
<feature type="compositionally biased region" description="Basic and acidic residues" evidence="7">
    <location>
        <begin position="1984"/>
        <end position="2001"/>
    </location>
</feature>
<feature type="compositionally biased region" description="Basic and acidic residues" evidence="7">
    <location>
        <begin position="2014"/>
        <end position="2030"/>
    </location>
</feature>
<feature type="modified residue" description="Phosphoserine" evidence="2">
    <location>
        <position position="1658"/>
    </location>
</feature>
<feature type="sequence variant" id="VAR_081831" description="In NEDIDHA." evidence="10">
    <location>
        <begin position="128"/>
        <end position="2030"/>
    </location>
</feature>
<feature type="sequence variant" id="VAR_081832" description="In NEDIDHA; uncertain significance; dbSNP:rs199600118." evidence="12">
    <original>R</original>
    <variation>Q</variation>
    <location>
        <position position="392"/>
    </location>
</feature>
<feature type="sequence variant" id="VAR_081833" description="In NEDIDHA; uncertain significance; dbSNP:rs201184598." evidence="12">
    <original>K</original>
    <variation>R</variation>
    <location>
        <position position="1296"/>
    </location>
</feature>
<feature type="sequence variant" id="VAR_081834" description="In NEDIDHA; uncertain significance; dbSNP:rs142515812." evidence="12">
    <original>M</original>
    <variation>L</variation>
    <location>
        <position position="1674"/>
    </location>
</feature>
<organism>
    <name type="scientific">Homo sapiens</name>
    <name type="common">Human</name>
    <dbReference type="NCBI Taxonomy" id="9606"/>
    <lineage>
        <taxon>Eukaryota</taxon>
        <taxon>Metazoa</taxon>
        <taxon>Chordata</taxon>
        <taxon>Craniata</taxon>
        <taxon>Vertebrata</taxon>
        <taxon>Euteleostomi</taxon>
        <taxon>Mammalia</taxon>
        <taxon>Eutheria</taxon>
        <taxon>Euarchontoglires</taxon>
        <taxon>Primates</taxon>
        <taxon>Haplorrhini</taxon>
        <taxon>Catarrhini</taxon>
        <taxon>Hominidae</taxon>
        <taxon>Homo</taxon>
    </lineage>
</organism>